<protein>
    <recommendedName>
        <fullName>Homeobox protein prophet of Pit-1</fullName>
        <shortName>PROP-1</shortName>
    </recommendedName>
    <alternativeName>
        <fullName>Pituitary-specific homeodomain factor</fullName>
    </alternativeName>
</protein>
<evidence type="ECO:0000250" key="1"/>
<evidence type="ECO:0000255" key="2">
    <source>
        <dbReference type="PROSITE-ProRule" id="PRU00108"/>
    </source>
</evidence>
<evidence type="ECO:0000256" key="3">
    <source>
        <dbReference type="SAM" id="MobiDB-lite"/>
    </source>
</evidence>
<evidence type="ECO:0000305" key="4"/>
<sequence length="226" mass="24888">MEAERRSQPGKPKKGRVCSSLLLERHPASGTLTTMVDSSAPPSRKRPGAGVGRPRFSPQGGQRGRPHSRRRHRTTFSAVQLEQLESAFGRNQYPDIWARESLARDTGLSEARIQVWFQNRRAKQRKQERSLLQPLAHLSPATFSGFLPGSPAGPYSYTTPPPPVTCFPHPYSHDFPSQPSTGGTFALPHQSEDGYPTLHPAPAGHLPCPPPPPMLPLSLEPSKSWN</sequence>
<gene>
    <name type="primary">PROP1</name>
</gene>
<comment type="function">
    <text evidence="1">Possibly involved in the ontogenesis of pituitary gonadotropes, as well as somatotropes, lactotropes and caudomedial thyrotropes.</text>
</comment>
<comment type="subcellular location">
    <subcellularLocation>
        <location evidence="2">Nucleus</location>
    </subcellularLocation>
</comment>
<comment type="similarity">
    <text evidence="4">Belongs to the paired homeobox family.</text>
</comment>
<organism>
    <name type="scientific">Sapajus apella</name>
    <name type="common">Brown-capped capuchin</name>
    <name type="synonym">Cebus apella</name>
    <dbReference type="NCBI Taxonomy" id="9515"/>
    <lineage>
        <taxon>Eukaryota</taxon>
        <taxon>Metazoa</taxon>
        <taxon>Chordata</taxon>
        <taxon>Craniata</taxon>
        <taxon>Vertebrata</taxon>
        <taxon>Euteleostomi</taxon>
        <taxon>Mammalia</taxon>
        <taxon>Eutheria</taxon>
        <taxon>Euarchontoglires</taxon>
        <taxon>Primates</taxon>
        <taxon>Haplorrhini</taxon>
        <taxon>Platyrrhini</taxon>
        <taxon>Cebidae</taxon>
        <taxon>Cebinae</taxon>
        <taxon>Sapajus</taxon>
    </lineage>
</organism>
<name>PROP1_SAPAP</name>
<accession>Q3LU40</accession>
<proteinExistence type="inferred from homology"/>
<reference key="1">
    <citation type="submission" date="2005-08" db="EMBL/GenBank/DDBJ databases">
        <title>Comparative genomics reveal functional transcriptional control sequences in the Prop1 gene.</title>
        <authorList>
            <person name="Camper S.A."/>
            <person name="Ward R.D."/>
            <person name="Cho M."/>
            <person name="Esposito C."/>
            <person name="Lyons R.H."/>
            <person name="Cheng J.-F."/>
            <person name="Rubin E.M."/>
            <person name="Rhodes S.J."/>
            <person name="Raetzman L.T."/>
            <person name="Smith T.P.L."/>
        </authorList>
    </citation>
    <scope>NUCLEOTIDE SEQUENCE [GENOMIC DNA]</scope>
</reference>
<dbReference type="EMBL" id="DQ177425">
    <property type="protein sequence ID" value="ABA26452.1"/>
    <property type="molecule type" value="Genomic_DNA"/>
</dbReference>
<dbReference type="SMR" id="Q3LU40"/>
<dbReference type="Proteomes" id="UP000504640">
    <property type="component" value="Unplaced"/>
</dbReference>
<dbReference type="GO" id="GO:0005634">
    <property type="term" value="C:nucleus"/>
    <property type="evidence" value="ECO:0007669"/>
    <property type="project" value="UniProtKB-SubCell"/>
</dbReference>
<dbReference type="GO" id="GO:0005667">
    <property type="term" value="C:transcription regulator complex"/>
    <property type="evidence" value="ECO:0007669"/>
    <property type="project" value="TreeGrafter"/>
</dbReference>
<dbReference type="GO" id="GO:0000981">
    <property type="term" value="F:DNA-binding transcription factor activity, RNA polymerase II-specific"/>
    <property type="evidence" value="ECO:0007669"/>
    <property type="project" value="InterPro"/>
</dbReference>
<dbReference type="GO" id="GO:0000978">
    <property type="term" value="F:RNA polymerase II cis-regulatory region sequence-specific DNA binding"/>
    <property type="evidence" value="ECO:0007669"/>
    <property type="project" value="TreeGrafter"/>
</dbReference>
<dbReference type="GO" id="GO:0021983">
    <property type="term" value="P:pituitary gland development"/>
    <property type="evidence" value="ECO:0007669"/>
    <property type="project" value="InterPro"/>
</dbReference>
<dbReference type="CDD" id="cd00086">
    <property type="entry name" value="homeodomain"/>
    <property type="match status" value="1"/>
</dbReference>
<dbReference type="FunFam" id="1.10.10.60:FF:000138">
    <property type="entry name" value="Homeobox protein prophet of Pit-1"/>
    <property type="match status" value="1"/>
</dbReference>
<dbReference type="Gene3D" id="1.10.10.60">
    <property type="entry name" value="Homeodomain-like"/>
    <property type="match status" value="1"/>
</dbReference>
<dbReference type="InterPro" id="IPR001356">
    <property type="entry name" value="HD"/>
</dbReference>
<dbReference type="InterPro" id="IPR017970">
    <property type="entry name" value="Homeobox_CS"/>
</dbReference>
<dbReference type="InterPro" id="IPR009057">
    <property type="entry name" value="Homeodomain-like_sf"/>
</dbReference>
<dbReference type="InterPro" id="IPR000047">
    <property type="entry name" value="HTH_motif"/>
</dbReference>
<dbReference type="InterPro" id="IPR042412">
    <property type="entry name" value="PROP1"/>
</dbReference>
<dbReference type="PANTHER" id="PTHR47409">
    <property type="entry name" value="HOMEOBOX PROTEIN PROPHET OF PIT-1"/>
    <property type="match status" value="1"/>
</dbReference>
<dbReference type="PANTHER" id="PTHR47409:SF1">
    <property type="entry name" value="HOMEOBOX PROTEIN PROPHET OF PIT-1"/>
    <property type="match status" value="1"/>
</dbReference>
<dbReference type="Pfam" id="PF00046">
    <property type="entry name" value="Homeodomain"/>
    <property type="match status" value="1"/>
</dbReference>
<dbReference type="PRINTS" id="PR00031">
    <property type="entry name" value="HTHREPRESSR"/>
</dbReference>
<dbReference type="SMART" id="SM00389">
    <property type="entry name" value="HOX"/>
    <property type="match status" value="1"/>
</dbReference>
<dbReference type="SUPFAM" id="SSF46689">
    <property type="entry name" value="Homeodomain-like"/>
    <property type="match status" value="1"/>
</dbReference>
<dbReference type="PROSITE" id="PS00027">
    <property type="entry name" value="HOMEOBOX_1"/>
    <property type="match status" value="1"/>
</dbReference>
<dbReference type="PROSITE" id="PS50071">
    <property type="entry name" value="HOMEOBOX_2"/>
    <property type="match status" value="1"/>
</dbReference>
<keyword id="KW-0238">DNA-binding</keyword>
<keyword id="KW-0371">Homeobox</keyword>
<keyword id="KW-0539">Nucleus</keyword>
<keyword id="KW-1185">Reference proteome</keyword>
<feature type="chain" id="PRO_0000049269" description="Homeobox protein prophet of Pit-1">
    <location>
        <begin position="1"/>
        <end position="226"/>
    </location>
</feature>
<feature type="DNA-binding region" description="Homeobox" evidence="2">
    <location>
        <begin position="69"/>
        <end position="128"/>
    </location>
</feature>
<feature type="region of interest" description="Disordered" evidence="3">
    <location>
        <begin position="1"/>
        <end position="73"/>
    </location>
</feature>
<feature type="region of interest" description="Disordered" evidence="3">
    <location>
        <begin position="177"/>
        <end position="226"/>
    </location>
</feature>
<feature type="compositionally biased region" description="Polar residues" evidence="3">
    <location>
        <begin position="30"/>
        <end position="41"/>
    </location>
</feature>
<feature type="compositionally biased region" description="Basic residues" evidence="3">
    <location>
        <begin position="64"/>
        <end position="73"/>
    </location>
</feature>
<feature type="compositionally biased region" description="Low complexity" evidence="3">
    <location>
        <begin position="216"/>
        <end position="226"/>
    </location>
</feature>